<comment type="function">
    <text evidence="1">Provides the precursors necessary for DNA synthesis. Catalyzes the biosynthesis of deoxyribonucleotides from the corresponding ribonucleotides (By similarity).</text>
</comment>
<comment type="catalytic activity">
    <reaction>
        <text>a 2'-deoxyribonucleoside 5'-diphosphate + [thioredoxin]-disulfide + H2O = a ribonucleoside 5'-diphosphate + [thioredoxin]-dithiol</text>
        <dbReference type="Rhea" id="RHEA:23252"/>
        <dbReference type="Rhea" id="RHEA-COMP:10698"/>
        <dbReference type="Rhea" id="RHEA-COMP:10700"/>
        <dbReference type="ChEBI" id="CHEBI:15377"/>
        <dbReference type="ChEBI" id="CHEBI:29950"/>
        <dbReference type="ChEBI" id="CHEBI:50058"/>
        <dbReference type="ChEBI" id="CHEBI:57930"/>
        <dbReference type="ChEBI" id="CHEBI:73316"/>
        <dbReference type="EC" id="1.17.4.1"/>
    </reaction>
</comment>
<comment type="activity regulation">
    <text evidence="1">Under complex allosteric control mediated by deoxynucleoside triphosphates and ATP binding. The type of nucleotide bound at the specificity site determines substrate preference. It seems probable that ATP makes the enzyme reduce CDP and UDP, dGTP favors ADP reduction and dTTP favors GDP reduction (By similarity).</text>
</comment>
<comment type="subunit">
    <text evidence="1">Tetramer of two alpha and two beta subunits.</text>
</comment>
<comment type="induction">
    <text evidence="2">Induced in response to the thiol oxidant diamide.</text>
</comment>
<comment type="similarity">
    <text evidence="3">Belongs to the ribonucleoside diphosphate reductase large chain family.</text>
</comment>
<comment type="sequence caution" evidence="3">
    <conflict type="erroneous initiation">
        <sequence resource="EMBL-CDS" id="SIU01702"/>
    </conflict>
    <text>Truncated N-terminus.</text>
</comment>
<organism>
    <name type="scientific">Mycobacterium bovis (strain ATCC BAA-935 / AF2122/97)</name>
    <dbReference type="NCBI Taxonomy" id="233413"/>
    <lineage>
        <taxon>Bacteria</taxon>
        <taxon>Bacillati</taxon>
        <taxon>Actinomycetota</taxon>
        <taxon>Actinomycetes</taxon>
        <taxon>Mycobacteriales</taxon>
        <taxon>Mycobacteriaceae</taxon>
        <taxon>Mycobacterium</taxon>
        <taxon>Mycobacterium tuberculosis complex</taxon>
    </lineage>
</organism>
<accession>P0A5W9</accession>
<accession>A0A1R3Y2Y8</accession>
<accession>O53296</accession>
<accession>P50640</accession>
<accession>X2BN79</accession>
<sequence length="725" mass="82441">MPPTVIAEPVASGAHASYSGGPGETDYHALNAMLNLYDADGKIQFDKDREAAHQYFLQHVNQNTVFFHNQDEKLDYLIRENYYEREVLDQYSRNFVKTLLDRAYAKKFRFPTFLGAFKYYTSYTLKTFDGKRYLERFEDRVVMVALTLAAGDTALAELLVDEIIDGRFQPATPTFLNSGKKQRGEPVSCFLLRVEDNMESIGRSINSALQLSKRGGGVALLLTNIREHGAPIKNIENQSSGVIPIMKLLEDAFSYANQLGARQGAGAVYLHAHHPDIYRFLDTKRENADEKIRIKTLSLGVVIPDITFELAKRNDDMYLFSPYDVERVYGVPFADISVTEKYYEMVDDARIRKTKIKAREFFQTLAELQFESGYPYIMFEDTVNRANPIDGKITHSNLCSEILQVSTPSLFNEDLSYAKVGKDISCNLGSLNIAKTMDSPDFAQTIEVAIRALTAVSDQTHIKSVPSIEQGNNDSHAIGLGQMNLHGYLARERIFYGSDEGIDFTNIYFYTVLYHALRASNRIAIERGTHFKGFERSKYASGEFFDKYTDQIWEPKTQKVRQLFADAGIRIPTQDDWRRLKESVQAHGIYNQNLQAVPPTGSISYINHSTSSIHPIVSKVEIRKEGKIGRVYYPAPYMTNDNLEYYEDAYEIGYEKIIDTYAAATQHVDQGLSLTLFFKDTATTRDVNKAQIYAWRKGIKTLYYIRLRQMALEGTEVEGCVSCML</sequence>
<proteinExistence type="evidence at protein level"/>
<feature type="chain" id="PRO_0000187219" description="Ribonucleoside-diphosphate reductase subunit alpha">
    <location>
        <begin position="1"/>
        <end position="725"/>
    </location>
</feature>
<feature type="active site" description="Proton acceptor" evidence="1">
    <location>
        <position position="397"/>
    </location>
</feature>
<feature type="active site" description="Cysteine radical intermediate" evidence="1">
    <location>
        <position position="399"/>
    </location>
</feature>
<feature type="active site" description="Proton acceptor" evidence="1">
    <location>
        <position position="401"/>
    </location>
</feature>
<feature type="binding site" evidence="1">
    <location>
        <position position="172"/>
    </location>
    <ligand>
        <name>substrate</name>
    </ligand>
</feature>
<feature type="binding site" evidence="1">
    <location>
        <begin position="188"/>
        <end position="189"/>
    </location>
    <ligand>
        <name>substrate</name>
    </ligand>
</feature>
<feature type="binding site" evidence="1">
    <location>
        <position position="217"/>
    </location>
    <ligand>
        <name>substrate</name>
    </ligand>
</feature>
<feature type="binding site" evidence="1">
    <location>
        <begin position="397"/>
        <end position="401"/>
    </location>
    <ligand>
        <name>substrate</name>
    </ligand>
</feature>
<feature type="binding site" evidence="1">
    <location>
        <begin position="599"/>
        <end position="603"/>
    </location>
    <ligand>
        <name>substrate</name>
    </ligand>
</feature>
<feature type="site" description="Important for hydrogen atom transfer" evidence="1">
    <location>
        <position position="189"/>
    </location>
</feature>
<feature type="site" description="Allosteric effector binding" evidence="1">
    <location>
        <position position="196"/>
    </location>
</feature>
<feature type="site" description="Allosteric effector binding" evidence="1">
    <location>
        <position position="226"/>
    </location>
</feature>
<feature type="site" description="Important for hydrogen atom transfer" evidence="1">
    <location>
        <position position="426"/>
    </location>
</feature>
<feature type="site" description="Important for electron transfer" evidence="1">
    <location>
        <position position="703"/>
    </location>
</feature>
<feature type="site" description="Important for electron transfer" evidence="1">
    <location>
        <position position="704"/>
    </location>
</feature>
<feature type="site" description="Interacts with thioredoxin/glutaredoxin" evidence="1">
    <location>
        <position position="720"/>
    </location>
</feature>
<feature type="site" description="Interacts with thioredoxin/glutaredoxin" evidence="1">
    <location>
        <position position="723"/>
    </location>
</feature>
<feature type="disulfide bond" description="Redox-active" evidence="1">
    <location>
        <begin position="189"/>
        <end position="426"/>
    </location>
</feature>
<name>RIR1_MYCBO</name>
<gene>
    <name type="primary">nrdE</name>
    <name type="ordered locus">BQ2027_MB3077C</name>
</gene>
<dbReference type="EC" id="1.17.4.1"/>
<dbReference type="EMBL" id="LT708304">
    <property type="protein sequence ID" value="SIU01702.1"/>
    <property type="status" value="ALT_INIT"/>
    <property type="molecule type" value="Genomic_DNA"/>
</dbReference>
<dbReference type="RefSeq" id="NP_856722.1">
    <property type="nucleotide sequence ID" value="NC_002945.3"/>
</dbReference>
<dbReference type="RefSeq" id="WP_003914457.1">
    <property type="nucleotide sequence ID" value="NC_002945.4"/>
</dbReference>
<dbReference type="SMR" id="P0A5W9"/>
<dbReference type="KEGG" id="mbo:BQ2027_MB3077C"/>
<dbReference type="PATRIC" id="fig|233413.5.peg.3381"/>
<dbReference type="Proteomes" id="UP000001419">
    <property type="component" value="Chromosome"/>
</dbReference>
<dbReference type="GO" id="GO:0005971">
    <property type="term" value="C:ribonucleoside-diphosphate reductase complex"/>
    <property type="evidence" value="ECO:0007669"/>
    <property type="project" value="TreeGrafter"/>
</dbReference>
<dbReference type="GO" id="GO:0005524">
    <property type="term" value="F:ATP binding"/>
    <property type="evidence" value="ECO:0007669"/>
    <property type="project" value="UniProtKB-KW"/>
</dbReference>
<dbReference type="GO" id="GO:0004748">
    <property type="term" value="F:ribonucleoside-diphosphate reductase activity, thioredoxin disulfide as acceptor"/>
    <property type="evidence" value="ECO:0007669"/>
    <property type="project" value="UniProtKB-EC"/>
</dbReference>
<dbReference type="GO" id="GO:0009263">
    <property type="term" value="P:deoxyribonucleotide biosynthetic process"/>
    <property type="evidence" value="ECO:0007669"/>
    <property type="project" value="UniProtKB-KW"/>
</dbReference>
<dbReference type="CDD" id="cd01679">
    <property type="entry name" value="RNR_I"/>
    <property type="match status" value="1"/>
</dbReference>
<dbReference type="FunFam" id="1.10.1650.20:FF:000002">
    <property type="entry name" value="Ribonucleoside-diphosphate reductase"/>
    <property type="match status" value="1"/>
</dbReference>
<dbReference type="Gene3D" id="1.10.1650.20">
    <property type="match status" value="1"/>
</dbReference>
<dbReference type="Gene3D" id="3.20.70.20">
    <property type="match status" value="1"/>
</dbReference>
<dbReference type="InterPro" id="IPR013346">
    <property type="entry name" value="NrdE_NrdA_C"/>
</dbReference>
<dbReference type="InterPro" id="IPR026459">
    <property type="entry name" value="RNR_1b_NrdE"/>
</dbReference>
<dbReference type="InterPro" id="IPR000788">
    <property type="entry name" value="RNR_lg_C"/>
</dbReference>
<dbReference type="InterPro" id="IPR013509">
    <property type="entry name" value="RNR_lsu_N"/>
</dbReference>
<dbReference type="InterPro" id="IPR013554">
    <property type="entry name" value="RNR_N"/>
</dbReference>
<dbReference type="InterPro" id="IPR008926">
    <property type="entry name" value="RNR_R1-su_N"/>
</dbReference>
<dbReference type="InterPro" id="IPR039718">
    <property type="entry name" value="Rrm1"/>
</dbReference>
<dbReference type="NCBIfam" id="TIGR02506">
    <property type="entry name" value="NrdE_NrdA"/>
    <property type="match status" value="1"/>
</dbReference>
<dbReference type="NCBIfam" id="TIGR04170">
    <property type="entry name" value="RNR_1b_NrdE"/>
    <property type="match status" value="1"/>
</dbReference>
<dbReference type="PANTHER" id="PTHR11573:SF30">
    <property type="entry name" value="RIBONUCLEOSIDE-DIPHOSPHATE REDUCTASE 2 SUBUNIT ALPHA"/>
    <property type="match status" value="1"/>
</dbReference>
<dbReference type="PANTHER" id="PTHR11573">
    <property type="entry name" value="RIBONUCLEOSIDE-DIPHOSPHATE REDUCTASE LARGE CHAIN"/>
    <property type="match status" value="1"/>
</dbReference>
<dbReference type="Pfam" id="PF02867">
    <property type="entry name" value="Ribonuc_red_lgC"/>
    <property type="match status" value="1"/>
</dbReference>
<dbReference type="Pfam" id="PF00317">
    <property type="entry name" value="Ribonuc_red_lgN"/>
    <property type="match status" value="1"/>
</dbReference>
<dbReference type="Pfam" id="PF08343">
    <property type="entry name" value="RNR_N"/>
    <property type="match status" value="1"/>
</dbReference>
<dbReference type="PRINTS" id="PR01183">
    <property type="entry name" value="RIBORDTASEM1"/>
</dbReference>
<dbReference type="SUPFAM" id="SSF51998">
    <property type="entry name" value="PFL-like glycyl radical enzymes"/>
    <property type="match status" value="1"/>
</dbReference>
<dbReference type="SUPFAM" id="SSF48168">
    <property type="entry name" value="R1 subunit of ribonucleotide reductase, N-terminal domain"/>
    <property type="match status" value="1"/>
</dbReference>
<dbReference type="PROSITE" id="PS00089">
    <property type="entry name" value="RIBORED_LARGE"/>
    <property type="match status" value="1"/>
</dbReference>
<protein>
    <recommendedName>
        <fullName>Ribonucleoside-diphosphate reductase subunit alpha</fullName>
        <ecNumber>1.17.4.1</ecNumber>
    </recommendedName>
    <alternativeName>
        <fullName>Ribonucleotide reductase R1 subunit</fullName>
    </alternativeName>
</protein>
<keyword id="KW-0021">Allosteric enzyme</keyword>
<keyword id="KW-0067">ATP-binding</keyword>
<keyword id="KW-0215">Deoxyribonucleotide synthesis</keyword>
<keyword id="KW-1015">Disulfide bond</keyword>
<keyword id="KW-0547">Nucleotide-binding</keyword>
<keyword id="KW-0560">Oxidoreductase</keyword>
<keyword id="KW-1185">Reference proteome</keyword>
<reference key="1">
    <citation type="journal article" date="2003" name="Proc. Natl. Acad. Sci. U.S.A.">
        <title>The complete genome sequence of Mycobacterium bovis.</title>
        <authorList>
            <person name="Garnier T."/>
            <person name="Eiglmeier K."/>
            <person name="Camus J.-C."/>
            <person name="Medina N."/>
            <person name="Mansoor H."/>
            <person name="Pryor M."/>
            <person name="Duthoy S."/>
            <person name="Grondin S."/>
            <person name="Lacroix C."/>
            <person name="Monsempe C."/>
            <person name="Simon S."/>
            <person name="Harris B."/>
            <person name="Atkin R."/>
            <person name="Doggett J."/>
            <person name="Mayes R."/>
            <person name="Keating L."/>
            <person name="Wheeler P.R."/>
            <person name="Parkhill J."/>
            <person name="Barrell B.G."/>
            <person name="Cole S.T."/>
            <person name="Gordon S.V."/>
            <person name="Hewinson R.G."/>
        </authorList>
    </citation>
    <scope>NUCLEOTIDE SEQUENCE [LARGE SCALE GENOMIC DNA]</scope>
    <source>
        <strain>ATCC BAA-935 / AF2122/97</strain>
    </source>
</reference>
<reference key="2">
    <citation type="journal article" date="2017" name="Genome Announc.">
        <title>Updated reference genome sequence and annotation of Mycobacterium bovis AF2122/97.</title>
        <authorList>
            <person name="Malone K.M."/>
            <person name="Farrell D."/>
            <person name="Stuber T.P."/>
            <person name="Schubert O.T."/>
            <person name="Aebersold R."/>
            <person name="Robbe-Austerman S."/>
            <person name="Gordon S.V."/>
        </authorList>
    </citation>
    <scope>NUCLEOTIDE SEQUENCE [LARGE SCALE GENOMIC DNA]</scope>
    <scope>GENOME REANNOTATION</scope>
    <source>
        <strain>ATCC BAA-935 / AF2122/97</strain>
    </source>
</reference>
<reference key="3">
    <citation type="journal article" date="2005" name="FEMS Microbiol. Lett.">
        <title>Thiol specific oxidative stress response in Mycobacteria.</title>
        <authorList>
            <person name="Dosanjh N.S."/>
            <person name="Rawat M."/>
            <person name="Chung J.-H."/>
            <person name="Av-Gay Y."/>
        </authorList>
    </citation>
    <scope>IDENTIFICATION BY MASS SPECTROMETRY</scope>
    <scope>INDUCTION</scope>
    <source>
        <strain>BCG / Pasteur</strain>
    </source>
</reference>
<evidence type="ECO:0000250" key="1"/>
<evidence type="ECO:0000269" key="2">
    <source>
    </source>
</evidence>
<evidence type="ECO:0000305" key="3"/>